<organism>
    <name type="scientific">Staphylococcus aureus (strain USA300 / TCH1516)</name>
    <dbReference type="NCBI Taxonomy" id="451516"/>
    <lineage>
        <taxon>Bacteria</taxon>
        <taxon>Bacillati</taxon>
        <taxon>Bacillota</taxon>
        <taxon>Bacilli</taxon>
        <taxon>Bacillales</taxon>
        <taxon>Staphylococcaceae</taxon>
        <taxon>Staphylococcus</taxon>
    </lineage>
</organism>
<proteinExistence type="inferred from homology"/>
<name>RLMH_STAAT</name>
<protein>
    <recommendedName>
        <fullName evidence="1">Ribosomal RNA large subunit methyltransferase H</fullName>
        <ecNumber evidence="1">2.1.1.177</ecNumber>
    </recommendedName>
    <alternativeName>
        <fullName evidence="1">23S rRNA (pseudouridine1915-N3)-methyltransferase</fullName>
    </alternativeName>
    <alternativeName>
        <fullName evidence="1">23S rRNA m3Psi1915 methyltransferase</fullName>
    </alternativeName>
    <alternativeName>
        <fullName evidence="1">rRNA (pseudouridine-N3-)-methyltransferase RlmH</fullName>
    </alternativeName>
</protein>
<reference key="1">
    <citation type="journal article" date="2007" name="BMC Microbiol.">
        <title>Subtle genetic changes enhance virulence of methicillin resistant and sensitive Staphylococcus aureus.</title>
        <authorList>
            <person name="Highlander S.K."/>
            <person name="Hulten K.G."/>
            <person name="Qin X."/>
            <person name="Jiang H."/>
            <person name="Yerrapragada S."/>
            <person name="Mason E.O. Jr."/>
            <person name="Shang Y."/>
            <person name="Williams T.M."/>
            <person name="Fortunov R.M."/>
            <person name="Liu Y."/>
            <person name="Igboeli O."/>
            <person name="Petrosino J."/>
            <person name="Tirumalai M."/>
            <person name="Uzman A."/>
            <person name="Fox G.E."/>
            <person name="Cardenas A.M."/>
            <person name="Muzny D.M."/>
            <person name="Hemphill L."/>
            <person name="Ding Y."/>
            <person name="Dugan S."/>
            <person name="Blyth P.R."/>
            <person name="Buhay C.J."/>
            <person name="Dinh H.H."/>
            <person name="Hawes A.C."/>
            <person name="Holder M."/>
            <person name="Kovar C.L."/>
            <person name="Lee S.L."/>
            <person name="Liu W."/>
            <person name="Nazareth L.V."/>
            <person name="Wang Q."/>
            <person name="Zhou J."/>
            <person name="Kaplan S.L."/>
            <person name="Weinstock G.M."/>
        </authorList>
    </citation>
    <scope>NUCLEOTIDE SEQUENCE [LARGE SCALE GENOMIC DNA]</scope>
    <source>
        <strain>USA300 / TCH1516</strain>
    </source>
</reference>
<evidence type="ECO:0000255" key="1">
    <source>
        <dbReference type="HAMAP-Rule" id="MF_00658"/>
    </source>
</evidence>
<gene>
    <name evidence="1" type="primary">rlmH</name>
    <name type="ordered locus">USA300HOU_0024</name>
</gene>
<dbReference type="EC" id="2.1.1.177" evidence="1"/>
<dbReference type="EMBL" id="CP000730">
    <property type="protein sequence ID" value="ABX28070.1"/>
    <property type="molecule type" value="Genomic_DNA"/>
</dbReference>
<dbReference type="RefSeq" id="WP_000704775.1">
    <property type="nucleotide sequence ID" value="NC_010079.1"/>
</dbReference>
<dbReference type="SMR" id="A8YYU7"/>
<dbReference type="GeneID" id="98344407"/>
<dbReference type="KEGG" id="sax:USA300HOU_0024"/>
<dbReference type="HOGENOM" id="CLU_100552_0_0_9"/>
<dbReference type="GO" id="GO:0005737">
    <property type="term" value="C:cytoplasm"/>
    <property type="evidence" value="ECO:0007669"/>
    <property type="project" value="UniProtKB-SubCell"/>
</dbReference>
<dbReference type="GO" id="GO:0070038">
    <property type="term" value="F:rRNA (pseudouridine-N3-)-methyltransferase activity"/>
    <property type="evidence" value="ECO:0007669"/>
    <property type="project" value="UniProtKB-UniRule"/>
</dbReference>
<dbReference type="CDD" id="cd18081">
    <property type="entry name" value="RlmH-like"/>
    <property type="match status" value="1"/>
</dbReference>
<dbReference type="Gene3D" id="3.40.1280.10">
    <property type="match status" value="1"/>
</dbReference>
<dbReference type="HAMAP" id="MF_00658">
    <property type="entry name" value="23SrRNA_methyltr_H"/>
    <property type="match status" value="1"/>
</dbReference>
<dbReference type="InterPro" id="IPR029028">
    <property type="entry name" value="Alpha/beta_knot_MTases"/>
</dbReference>
<dbReference type="InterPro" id="IPR003742">
    <property type="entry name" value="RlmH-like"/>
</dbReference>
<dbReference type="InterPro" id="IPR029026">
    <property type="entry name" value="tRNA_m1G_MTases_N"/>
</dbReference>
<dbReference type="NCBIfam" id="NF000985">
    <property type="entry name" value="PRK00103.1-3"/>
    <property type="match status" value="1"/>
</dbReference>
<dbReference type="NCBIfam" id="NF000986">
    <property type="entry name" value="PRK00103.1-4"/>
    <property type="match status" value="1"/>
</dbReference>
<dbReference type="NCBIfam" id="TIGR00246">
    <property type="entry name" value="tRNA_RlmH_YbeA"/>
    <property type="match status" value="1"/>
</dbReference>
<dbReference type="PANTHER" id="PTHR33603">
    <property type="entry name" value="METHYLTRANSFERASE"/>
    <property type="match status" value="1"/>
</dbReference>
<dbReference type="PANTHER" id="PTHR33603:SF1">
    <property type="entry name" value="RIBOSOMAL RNA LARGE SUBUNIT METHYLTRANSFERASE H"/>
    <property type="match status" value="1"/>
</dbReference>
<dbReference type="Pfam" id="PF02590">
    <property type="entry name" value="SPOUT_MTase"/>
    <property type="match status" value="1"/>
</dbReference>
<dbReference type="PIRSF" id="PIRSF004505">
    <property type="entry name" value="MT_bac"/>
    <property type="match status" value="1"/>
</dbReference>
<dbReference type="SUPFAM" id="SSF75217">
    <property type="entry name" value="alpha/beta knot"/>
    <property type="match status" value="1"/>
</dbReference>
<sequence>MKITILAVGKLKEKYWKQAIAEYEKRLGPYTKIDIIEVPDEKAPENMSDKEIEQVKEKEGQRILAKIKPQSTVITLEIQGKMLSSEGLAQELNQRMTQGQSDFVFVIGGSNGLHKDVLQRSNYALSFSKMTFPHQMMRVVLIEQVYRAFKIMRGEAYHK</sequence>
<accession>A8YYU7</accession>
<feature type="chain" id="PRO_1000082820" description="Ribosomal RNA large subunit methyltransferase H">
    <location>
        <begin position="1"/>
        <end position="159"/>
    </location>
</feature>
<feature type="binding site" evidence="1">
    <location>
        <position position="76"/>
    </location>
    <ligand>
        <name>S-adenosyl-L-methionine</name>
        <dbReference type="ChEBI" id="CHEBI:59789"/>
    </ligand>
</feature>
<feature type="binding site" evidence="1">
    <location>
        <position position="108"/>
    </location>
    <ligand>
        <name>S-adenosyl-L-methionine</name>
        <dbReference type="ChEBI" id="CHEBI:59789"/>
    </ligand>
</feature>
<feature type="binding site" evidence="1">
    <location>
        <begin position="127"/>
        <end position="132"/>
    </location>
    <ligand>
        <name>S-adenosyl-L-methionine</name>
        <dbReference type="ChEBI" id="CHEBI:59789"/>
    </ligand>
</feature>
<comment type="function">
    <text evidence="1">Specifically methylates the pseudouridine at position 1915 (m3Psi1915) in 23S rRNA.</text>
</comment>
<comment type="catalytic activity">
    <reaction evidence="1">
        <text>pseudouridine(1915) in 23S rRNA + S-adenosyl-L-methionine = N(3)-methylpseudouridine(1915) in 23S rRNA + S-adenosyl-L-homocysteine + H(+)</text>
        <dbReference type="Rhea" id="RHEA:42752"/>
        <dbReference type="Rhea" id="RHEA-COMP:10221"/>
        <dbReference type="Rhea" id="RHEA-COMP:10222"/>
        <dbReference type="ChEBI" id="CHEBI:15378"/>
        <dbReference type="ChEBI" id="CHEBI:57856"/>
        <dbReference type="ChEBI" id="CHEBI:59789"/>
        <dbReference type="ChEBI" id="CHEBI:65314"/>
        <dbReference type="ChEBI" id="CHEBI:74486"/>
        <dbReference type="EC" id="2.1.1.177"/>
    </reaction>
</comment>
<comment type="subunit">
    <text evidence="1">Homodimer.</text>
</comment>
<comment type="subcellular location">
    <subcellularLocation>
        <location evidence="1">Cytoplasm</location>
    </subcellularLocation>
</comment>
<comment type="similarity">
    <text evidence="1">Belongs to the RNA methyltransferase RlmH family.</text>
</comment>
<keyword id="KW-0963">Cytoplasm</keyword>
<keyword id="KW-0489">Methyltransferase</keyword>
<keyword id="KW-0698">rRNA processing</keyword>
<keyword id="KW-0949">S-adenosyl-L-methionine</keyword>
<keyword id="KW-0808">Transferase</keyword>